<evidence type="ECO:0000250" key="1">
    <source>
        <dbReference type="UniProtKB" id="P00785"/>
    </source>
</evidence>
<evidence type="ECO:0000250" key="2">
    <source>
        <dbReference type="UniProtKB" id="P43297"/>
    </source>
</evidence>
<evidence type="ECO:0000250" key="3">
    <source>
        <dbReference type="UniProtKB" id="P80884"/>
    </source>
</evidence>
<evidence type="ECO:0000250" key="4">
    <source>
        <dbReference type="UniProtKB" id="P84346"/>
    </source>
</evidence>
<evidence type="ECO:0000255" key="5"/>
<evidence type="ECO:0000255" key="6">
    <source>
        <dbReference type="PROSITE-ProRule" id="PRU00498"/>
    </source>
</evidence>
<evidence type="ECO:0000255" key="7">
    <source>
        <dbReference type="PROSITE-ProRule" id="PRU10088"/>
    </source>
</evidence>
<evidence type="ECO:0000255" key="8">
    <source>
        <dbReference type="PROSITE-ProRule" id="PRU10089"/>
    </source>
</evidence>
<evidence type="ECO:0000255" key="9">
    <source>
        <dbReference type="PROSITE-ProRule" id="PRU10090"/>
    </source>
</evidence>
<evidence type="ECO:0000269" key="10">
    <source>
    </source>
</evidence>
<evidence type="ECO:0000269" key="11">
    <source>
    </source>
</evidence>
<evidence type="ECO:0000269" key="12">
    <source>
    </source>
</evidence>
<evidence type="ECO:0000303" key="13">
    <source>
    </source>
</evidence>
<evidence type="ECO:0000303" key="14">
    <source>
    </source>
</evidence>
<evidence type="ECO:0000305" key="15"/>
<evidence type="ECO:0000312" key="16">
    <source>
        <dbReference type="Araport" id="AT2G21430"/>
    </source>
</evidence>
<evidence type="ECO:0000312" key="17">
    <source>
        <dbReference type="EMBL" id="AAD23687.1"/>
    </source>
</evidence>
<reference key="1">
    <citation type="journal article" date="1999" name="Nature">
        <title>Sequence and analysis of chromosome 2 of the plant Arabidopsis thaliana.</title>
        <authorList>
            <person name="Lin X."/>
            <person name="Kaul S."/>
            <person name="Rounsley S.D."/>
            <person name="Shea T.P."/>
            <person name="Benito M.-I."/>
            <person name="Town C.D."/>
            <person name="Fujii C.Y."/>
            <person name="Mason T.M."/>
            <person name="Bowman C.L."/>
            <person name="Barnstead M.E."/>
            <person name="Feldblyum T.V."/>
            <person name="Buell C.R."/>
            <person name="Ketchum K.A."/>
            <person name="Lee J.J."/>
            <person name="Ronning C.M."/>
            <person name="Koo H.L."/>
            <person name="Moffat K.S."/>
            <person name="Cronin L.A."/>
            <person name="Shen M."/>
            <person name="Pai G."/>
            <person name="Van Aken S."/>
            <person name="Umayam L."/>
            <person name="Tallon L.J."/>
            <person name="Gill J.E."/>
            <person name="Adams M.D."/>
            <person name="Carrera A.J."/>
            <person name="Creasy T.H."/>
            <person name="Goodman H.M."/>
            <person name="Somerville C.R."/>
            <person name="Copenhaver G.P."/>
            <person name="Preuss D."/>
            <person name="Nierman W.C."/>
            <person name="White O."/>
            <person name="Eisen J.A."/>
            <person name="Salzberg S.L."/>
            <person name="Fraser C.M."/>
            <person name="Venter J.C."/>
        </authorList>
    </citation>
    <scope>NUCLEOTIDE SEQUENCE [LARGE SCALE GENOMIC DNA]</scope>
    <source>
        <strain>cv. Columbia</strain>
    </source>
</reference>
<reference key="2">
    <citation type="journal article" date="2017" name="Plant J.">
        <title>Araport11: a complete reannotation of the Arabidopsis thaliana reference genome.</title>
        <authorList>
            <person name="Cheng C.Y."/>
            <person name="Krishnakumar V."/>
            <person name="Chan A.P."/>
            <person name="Thibaud-Nissen F."/>
            <person name="Schobel S."/>
            <person name="Town C.D."/>
        </authorList>
    </citation>
    <scope>GENOME REANNOTATION</scope>
    <source>
        <strain>cv. Columbia</strain>
    </source>
</reference>
<reference key="3">
    <citation type="submission" date="2004-09" db="EMBL/GenBank/DDBJ databases">
        <title>Large-scale analysis of RIKEN Arabidopsis full-length (RAFL) cDNAs.</title>
        <authorList>
            <person name="Totoki Y."/>
            <person name="Seki M."/>
            <person name="Ishida J."/>
            <person name="Nakajima M."/>
            <person name="Enju A."/>
            <person name="Kamiya A."/>
            <person name="Narusaka M."/>
            <person name="Shin-i T."/>
            <person name="Nakagawa M."/>
            <person name="Sakamoto N."/>
            <person name="Oishi K."/>
            <person name="Kohara Y."/>
            <person name="Kobayashi M."/>
            <person name="Toyoda A."/>
            <person name="Sakaki Y."/>
            <person name="Sakurai T."/>
            <person name="Iida K."/>
            <person name="Akiyama K."/>
            <person name="Satou M."/>
            <person name="Toyoda T."/>
            <person name="Konagaya A."/>
            <person name="Carninci P."/>
            <person name="Kawai J."/>
            <person name="Hayashizaki Y."/>
            <person name="Shinozaki K."/>
        </authorList>
    </citation>
    <scope>NUCLEOTIDE SEQUENCE [LARGE SCALE MRNA]</scope>
    <source>
        <strain>cv. Columbia</strain>
    </source>
</reference>
<reference key="4">
    <citation type="submission" date="2006-10" db="EMBL/GenBank/DDBJ databases">
        <title>Arabidopsis ORF Clones.</title>
        <authorList>
            <person name="Quinitio C."/>
            <person name="Chen H."/>
            <person name="Kim C.J."/>
            <person name="Shinn P."/>
            <person name="Ecker J.R."/>
        </authorList>
    </citation>
    <scope>NUCLEOTIDE SEQUENCE [LARGE SCALE MRNA]</scope>
    <source>
        <strain>cv. Columbia</strain>
    </source>
</reference>
<reference key="5">
    <citation type="journal article" date="1994" name="Plant Mol. Biol.">
        <title>Characterization of a cDNA from Arabidopsis thaliana encoding a potential thiol protease whose expression is induced independently by wilting and abscisic acid.</title>
        <authorList>
            <person name="Williams J."/>
            <person name="Bulman M."/>
            <person name="Huttly A.K."/>
            <person name="Phillips A."/>
            <person name="Neill S."/>
        </authorList>
    </citation>
    <scope>NUCLEOTIDE SEQUENCE [MRNA] OF 49-361</scope>
    <scope>INDUCTION</scope>
    <source>
        <strain>cv. Landsberg erecta</strain>
    </source>
</reference>
<reference key="6">
    <citation type="journal article" date="2002" name="Ann. Bot.">
        <title>Classification of genes differentially expressed during water-deficit stress in Arabidopsis thaliana: an analysis using microarray and differential expression data.</title>
        <authorList>
            <person name="Bray E.A."/>
        </authorList>
    </citation>
    <scope>INDUCTION BY DROUGHT STRESS</scope>
</reference>
<reference key="7">
    <citation type="journal article" date="2008" name="Plant Cell">
        <title>RD19, an Arabidopsis cysteine protease required for RRS1-R-mediated resistance, is relocalized to the nucleus by the Ralstonia solanacearum PopP2 effector.</title>
        <authorList>
            <person name="Bernoux M."/>
            <person name="Timmers T."/>
            <person name="Jauneau A."/>
            <person name="Briere C."/>
            <person name="de Wit P.J."/>
            <person name="Marco Y."/>
            <person name="Deslandes L."/>
        </authorList>
    </citation>
    <scope>SUBCELLULAR LOCATION</scope>
</reference>
<feature type="signal peptide" evidence="5">
    <location>
        <begin position="1"/>
        <end position="24"/>
    </location>
</feature>
<feature type="propeptide" id="PRO_0000026453" description="Activation peptide" evidence="1">
    <location>
        <begin position="25"/>
        <end position="131"/>
    </location>
</feature>
<feature type="chain" id="PRO_0000026454" description="Probable cysteine protease RD19B">
    <location>
        <begin position="132"/>
        <end position="361"/>
    </location>
</feature>
<feature type="active site" evidence="7">
    <location>
        <position position="156"/>
    </location>
</feature>
<feature type="active site" evidence="8">
    <location>
        <position position="299"/>
    </location>
</feature>
<feature type="active site" evidence="9">
    <location>
        <position position="326"/>
    </location>
</feature>
<feature type="glycosylation site" description="N-linked (GlcNAc...) asparagine" evidence="6">
    <location>
        <position position="250"/>
    </location>
</feature>
<feature type="disulfide bond" evidence="4">
    <location>
        <begin position="153"/>
        <end position="203"/>
    </location>
</feature>
<feature type="disulfide bond" evidence="4">
    <location>
        <begin position="187"/>
        <end position="237"/>
    </location>
</feature>
<feature type="disulfide bond" evidence="4">
    <location>
        <begin position="293"/>
        <end position="347"/>
    </location>
</feature>
<feature type="sequence conflict" description="In Ref. 5; CAA52403." evidence="15" ref="5">
    <original>T</original>
    <variation>A</variation>
    <location>
        <position position="49"/>
    </location>
</feature>
<feature type="sequence conflict" description="In Ref. 3; BAD43619." evidence="15" ref="3">
    <original>G</original>
    <variation>R</variation>
    <location>
        <position position="206"/>
    </location>
</feature>
<sequence>MDYHLRVLFSVSLIFVFVSVSVCGDEDVLIRQVVDETEPKVLSSEDHFTLFKKKFGKVYGSIEEHYYRFSVFKANLLRAMRHQKMDPSARHGVTQFSDLTRSEFRRKHLGVKGGFKLPKDANQAPILPTQNLPEEFDWRDRGAVTPVKNQGSCGSCWSFSTTGALEGAHFLATGKLVSLSEQQLVDCDHECDPEEEGSCDSGCNGGLMNSAFEYTLKTGGLMREKDYPYTGTDGGSCKLDRSKIVASVSNFSVVSINEDQIAANLIKNGPLAVAINAAYMQTYIGGVSCPYICSRRLNHGVLLVGYGSAGFSQARLKEKPYWIIKNSWGESWGENGFYKICKGRNICGVDSLVSTVAATTS</sequence>
<keyword id="KW-1015">Disulfide bond</keyword>
<keyword id="KW-0325">Glycoprotein</keyword>
<keyword id="KW-0378">Hydrolase</keyword>
<keyword id="KW-0645">Protease</keyword>
<keyword id="KW-1185">Reference proteome</keyword>
<keyword id="KW-0732">Signal</keyword>
<keyword id="KW-0788">Thiol protease</keyword>
<keyword id="KW-0926">Vacuole</keyword>
<keyword id="KW-0865">Zymogen</keyword>
<comment type="function">
    <text evidence="2">Probable thiol protease.</text>
</comment>
<comment type="subcellular location">
    <subcellularLocation>
        <location evidence="11">Lytic vacuole</location>
    </subcellularLocation>
    <text evidence="11">Predominantly vacuolar. From the Golgi apparatus, probably transported to the lytic vacuole (LV) in clathrin-coated vesicles (CCVs) via the prevacuolar compartment (PVC).</text>
</comment>
<comment type="induction">
    <text evidence="10 12">By wilting and abscisic acid (ABA) (PubMed:8018874). Induced by drought stress (PubMed:12102506).</text>
</comment>
<comment type="similarity">
    <text evidence="7 8 9">Belongs to the peptidase C1 family.</text>
</comment>
<organism>
    <name type="scientific">Arabidopsis thaliana</name>
    <name type="common">Mouse-ear cress</name>
    <dbReference type="NCBI Taxonomy" id="3702"/>
    <lineage>
        <taxon>Eukaryota</taxon>
        <taxon>Viridiplantae</taxon>
        <taxon>Streptophyta</taxon>
        <taxon>Embryophyta</taxon>
        <taxon>Tracheophyta</taxon>
        <taxon>Spermatophyta</taxon>
        <taxon>Magnoliopsida</taxon>
        <taxon>eudicotyledons</taxon>
        <taxon>Gunneridae</taxon>
        <taxon>Pentapetalae</taxon>
        <taxon>rosids</taxon>
        <taxon>malvids</taxon>
        <taxon>Brassicales</taxon>
        <taxon>Brassicaceae</taxon>
        <taxon>Camelineae</taxon>
        <taxon>Arabidopsis</taxon>
    </lineage>
</organism>
<dbReference type="EC" id="3.4.22.-" evidence="3"/>
<dbReference type="EMBL" id="AC006841">
    <property type="protein sequence ID" value="AAD23687.1"/>
    <property type="molecule type" value="Genomic_DNA"/>
</dbReference>
<dbReference type="EMBL" id="CP002685">
    <property type="protein sequence ID" value="AEC07177.1"/>
    <property type="molecule type" value="Genomic_DNA"/>
</dbReference>
<dbReference type="EMBL" id="AK175856">
    <property type="protein sequence ID" value="BAD43619.1"/>
    <property type="molecule type" value="mRNA"/>
</dbReference>
<dbReference type="EMBL" id="BT029231">
    <property type="protein sequence ID" value="ABJ98563.1"/>
    <property type="molecule type" value="mRNA"/>
</dbReference>
<dbReference type="EMBL" id="X74359">
    <property type="protein sequence ID" value="CAA52403.1"/>
    <property type="molecule type" value="mRNA"/>
</dbReference>
<dbReference type="PIR" id="B84601">
    <property type="entry name" value="B84601"/>
</dbReference>
<dbReference type="RefSeq" id="NP_565512.1">
    <property type="nucleotide sequence ID" value="NM_127715.4"/>
</dbReference>
<dbReference type="SMR" id="P43295"/>
<dbReference type="FunCoup" id="P43295">
    <property type="interactions" value="425"/>
</dbReference>
<dbReference type="STRING" id="3702.P43295"/>
<dbReference type="MEROPS" id="C01.A04"/>
<dbReference type="GlyCosmos" id="P43295">
    <property type="glycosylation" value="1 site, No reported glycans"/>
</dbReference>
<dbReference type="GlyGen" id="P43295">
    <property type="glycosylation" value="2 sites"/>
</dbReference>
<dbReference type="iPTMnet" id="P43295"/>
<dbReference type="PaxDb" id="3702-AT2G21430.1"/>
<dbReference type="ProteomicsDB" id="225924"/>
<dbReference type="EnsemblPlants" id="AT2G21430.1">
    <property type="protein sequence ID" value="AT2G21430.1"/>
    <property type="gene ID" value="AT2G21430"/>
</dbReference>
<dbReference type="GeneID" id="816682"/>
<dbReference type="Gramene" id="AT2G21430.1">
    <property type="protein sequence ID" value="AT2G21430.1"/>
    <property type="gene ID" value="AT2G21430"/>
</dbReference>
<dbReference type="KEGG" id="ath:AT2G21430"/>
<dbReference type="Araport" id="AT2G21430"/>
<dbReference type="TAIR" id="AT2G21430"/>
<dbReference type="eggNOG" id="KOG1542">
    <property type="taxonomic scope" value="Eukaryota"/>
</dbReference>
<dbReference type="HOGENOM" id="CLU_012184_1_3_1"/>
<dbReference type="InParanoid" id="P43295"/>
<dbReference type="OMA" id="AMRHQKM"/>
<dbReference type="OrthoDB" id="10253408at2759"/>
<dbReference type="PhylomeDB" id="P43295"/>
<dbReference type="PRO" id="PR:P43295"/>
<dbReference type="Proteomes" id="UP000006548">
    <property type="component" value="Chromosome 2"/>
</dbReference>
<dbReference type="ExpressionAtlas" id="P43295">
    <property type="expression patterns" value="baseline and differential"/>
</dbReference>
<dbReference type="GO" id="GO:0000323">
    <property type="term" value="C:lytic vacuole"/>
    <property type="evidence" value="ECO:0000314"/>
    <property type="project" value="UniProtKB"/>
</dbReference>
<dbReference type="GO" id="GO:0008234">
    <property type="term" value="F:cysteine-type peptidase activity"/>
    <property type="evidence" value="ECO:0007669"/>
    <property type="project" value="UniProtKB-KW"/>
</dbReference>
<dbReference type="GO" id="GO:0006508">
    <property type="term" value="P:proteolysis"/>
    <property type="evidence" value="ECO:0007669"/>
    <property type="project" value="UniProtKB-KW"/>
</dbReference>
<dbReference type="CDD" id="cd02248">
    <property type="entry name" value="Peptidase_C1A"/>
    <property type="match status" value="1"/>
</dbReference>
<dbReference type="FunFam" id="3.90.70.10:FF:000057">
    <property type="entry name" value="Cysteine protease RD19A"/>
    <property type="match status" value="1"/>
</dbReference>
<dbReference type="Gene3D" id="3.90.70.10">
    <property type="entry name" value="Cysteine proteinases"/>
    <property type="match status" value="1"/>
</dbReference>
<dbReference type="InterPro" id="IPR038765">
    <property type="entry name" value="Papain-like_cys_pep_sf"/>
</dbReference>
<dbReference type="InterPro" id="IPR025661">
    <property type="entry name" value="Pept_asp_AS"/>
</dbReference>
<dbReference type="InterPro" id="IPR000169">
    <property type="entry name" value="Pept_cys_AS"/>
</dbReference>
<dbReference type="InterPro" id="IPR025660">
    <property type="entry name" value="Pept_his_AS"/>
</dbReference>
<dbReference type="InterPro" id="IPR013128">
    <property type="entry name" value="Peptidase_C1A"/>
</dbReference>
<dbReference type="InterPro" id="IPR000668">
    <property type="entry name" value="Peptidase_C1A_C"/>
</dbReference>
<dbReference type="InterPro" id="IPR039417">
    <property type="entry name" value="Peptidase_C1A_papain-like"/>
</dbReference>
<dbReference type="InterPro" id="IPR013201">
    <property type="entry name" value="Prot_inhib_I29"/>
</dbReference>
<dbReference type="PANTHER" id="PTHR12411">
    <property type="entry name" value="CYSTEINE PROTEASE FAMILY C1-RELATED"/>
    <property type="match status" value="1"/>
</dbReference>
<dbReference type="Pfam" id="PF08246">
    <property type="entry name" value="Inhibitor_I29"/>
    <property type="match status" value="1"/>
</dbReference>
<dbReference type="Pfam" id="PF00112">
    <property type="entry name" value="Peptidase_C1"/>
    <property type="match status" value="1"/>
</dbReference>
<dbReference type="PRINTS" id="PR00705">
    <property type="entry name" value="PAPAIN"/>
</dbReference>
<dbReference type="SMART" id="SM00848">
    <property type="entry name" value="Inhibitor_I29"/>
    <property type="match status" value="1"/>
</dbReference>
<dbReference type="SMART" id="SM00645">
    <property type="entry name" value="Pept_C1"/>
    <property type="match status" value="1"/>
</dbReference>
<dbReference type="SUPFAM" id="SSF54001">
    <property type="entry name" value="Cysteine proteinases"/>
    <property type="match status" value="1"/>
</dbReference>
<dbReference type="PROSITE" id="PS00640">
    <property type="entry name" value="THIOL_PROTEASE_ASN"/>
    <property type="match status" value="1"/>
</dbReference>
<dbReference type="PROSITE" id="PS00139">
    <property type="entry name" value="THIOL_PROTEASE_CYS"/>
    <property type="match status" value="1"/>
</dbReference>
<dbReference type="PROSITE" id="PS00639">
    <property type="entry name" value="THIOL_PROTEASE_HIS"/>
    <property type="match status" value="1"/>
</dbReference>
<gene>
    <name evidence="15" type="primary">RD19B</name>
    <name evidence="13" type="synonym">RDL1</name>
    <name evidence="16" type="ordered locus">At2g21430</name>
    <name evidence="17" type="ORF">F3K23.19</name>
</gene>
<name>RD19B_ARATH</name>
<protein>
    <recommendedName>
        <fullName evidence="15">Probable cysteine protease RD19B</fullName>
        <ecNumber evidence="3">3.4.22.-</ecNumber>
    </recommendedName>
    <alternativeName>
        <fullName evidence="13">RD19-like protein 1</fullName>
    </alternativeName>
    <alternativeName>
        <fullName evidence="14">Thiol protease A1494</fullName>
    </alternativeName>
</protein>
<proteinExistence type="evidence at transcript level"/>
<accession>P43295</accession>
<accession>Q058I7</accession>
<accession>Q680L1</accession>
<accession>Q9SJT5</accession>